<evidence type="ECO:0000250" key="1"/>
<evidence type="ECO:0000255" key="2"/>
<evidence type="ECO:0000255" key="3">
    <source>
        <dbReference type="PROSITE-ProRule" id="PRU00543"/>
    </source>
</evidence>
<evidence type="ECO:0000255" key="4">
    <source>
        <dbReference type="PROSITE-ProRule" id="PRU00544"/>
    </source>
</evidence>
<organism>
    <name type="scientific">Methanosarcina mazei (strain ATCC BAA-159 / DSM 3647 / Goe1 / Go1 / JCM 11833 / OCM 88)</name>
    <name type="common">Methanosarcina frisia</name>
    <dbReference type="NCBI Taxonomy" id="192952"/>
    <lineage>
        <taxon>Archaea</taxon>
        <taxon>Methanobacteriati</taxon>
        <taxon>Methanobacteriota</taxon>
        <taxon>Stenosarchaea group</taxon>
        <taxon>Methanomicrobia</taxon>
        <taxon>Methanosarcinales</taxon>
        <taxon>Methanosarcinaceae</taxon>
        <taxon>Methanosarcina</taxon>
    </lineage>
</organism>
<comment type="function">
    <text evidence="1">Part of a potassium transport system.</text>
</comment>
<comment type="domain">
    <text evidence="1">The RCK N-terminal domain binds NAD and possibly other effectors. This is expected to cause a conformation change that regulates potassium transport (By similarity).</text>
</comment>
<sequence>MKAVIIGAGEVGYHIAKALSPKNDVVIIDKDEEAAKRADELDVLVIEGNGANAEILSRVLQNADLLVAVTGVDEVNIVACMTAKLIMKNKNGWKDTKTIARVSNPDYIDSPVTSRAQVGVDLMICPELALASEVADILSSPSAIDAEMFAEGKVRMTEFAISPESKLVGKHMQDLKLADCCIVSAVFREDQIIIPHGDDLIKANDHMVVVGKPESMEDLESVFGSKVSHRTRILLIGCGIVGMYLAKLIDKEENADLRIIEHSKSRCIEVAEILENALVLNGDGTDVSLLREENIEDMDVVVAVTDSDEKNLLCSLLAKQLGAKKVIARADRSDYLPLFEMVGIDMAVSPREATVNEVLKLTMGRGIQTLTTIEGERAEIIEYTASEKSRIVGKPLNKVKFPKGALINMVVRGKETIIPRGDFIVNEGDRVVIFSMASAASEVEKYFK</sequence>
<accession>P0CW17</accession>
<accession>P39449</accession>
<name>TRKA1_METMA</name>
<gene>
    <name type="primary">trkA1</name>
    <name type="synonym">trkA</name>
    <name type="ordered locus">MM_2503</name>
</gene>
<keyword id="KW-0406">Ion transport</keyword>
<keyword id="KW-0520">NAD</keyword>
<keyword id="KW-0630">Potassium</keyword>
<keyword id="KW-0633">Potassium transport</keyword>
<keyword id="KW-0677">Repeat</keyword>
<keyword id="KW-0813">Transport</keyword>
<feature type="chain" id="PRO_0000408041" description="Trk system potassium uptake protein TrkA homolog 1">
    <location>
        <begin position="1"/>
        <end position="448"/>
    </location>
</feature>
<feature type="domain" description="RCK N-terminal 1" evidence="3">
    <location>
        <begin position="1"/>
        <end position="124"/>
    </location>
</feature>
<feature type="domain" description="RCK C-terminal 1" evidence="4">
    <location>
        <begin position="144"/>
        <end position="225"/>
    </location>
</feature>
<feature type="domain" description="RCK N-terminal 2" evidence="3">
    <location>
        <begin position="230"/>
        <end position="348"/>
    </location>
</feature>
<feature type="domain" description="RCK C-terminal 2" evidence="4">
    <location>
        <begin position="368"/>
        <end position="448"/>
    </location>
</feature>
<feature type="binding site" description="in other chain" evidence="1">
    <location>
        <begin position="7"/>
        <end position="11"/>
    </location>
    <ligand>
        <name>NAD(+)</name>
        <dbReference type="ChEBI" id="CHEBI:57540"/>
        <label>1</label>
        <note>ligand shared between dimeric partners</note>
    </ligand>
</feature>
<feature type="binding site" description="in other chain" evidence="1">
    <location>
        <position position="29"/>
    </location>
    <ligand>
        <name>NAD(+)</name>
        <dbReference type="ChEBI" id="CHEBI:57540"/>
        <label>1</label>
        <note>ligand shared between dimeric partners</note>
    </ligand>
</feature>
<feature type="binding site" description="in other chain" evidence="1">
    <location>
        <begin position="70"/>
        <end position="71"/>
    </location>
    <ligand>
        <name>NAD(+)</name>
        <dbReference type="ChEBI" id="CHEBI:57540"/>
        <label>1</label>
        <note>ligand shared between dimeric partners</note>
    </ligand>
</feature>
<feature type="binding site" evidence="1">
    <location>
        <position position="101"/>
    </location>
    <ligand>
        <name>NAD(+)</name>
        <dbReference type="ChEBI" id="CHEBI:57540"/>
        <label>1</label>
        <note>ligand shared between dimeric partners</note>
    </ligand>
</feature>
<feature type="binding site" evidence="2">
    <location>
        <begin position="232"/>
        <end position="262"/>
    </location>
    <ligand>
        <name>NAD(+)</name>
        <dbReference type="ChEBI" id="CHEBI:57540"/>
        <label>2</label>
    </ligand>
</feature>
<proteinExistence type="inferred from homology"/>
<dbReference type="EMBL" id="AE008384">
    <property type="protein sequence ID" value="AAM32199.1"/>
    <property type="molecule type" value="Genomic_DNA"/>
</dbReference>
<dbReference type="RefSeq" id="WP_011034421.1">
    <property type="nucleotide sequence ID" value="NC_003901.1"/>
</dbReference>
<dbReference type="SMR" id="P0CW17"/>
<dbReference type="GeneID" id="82161580"/>
<dbReference type="KEGG" id="mma:MM_2503"/>
<dbReference type="PATRIC" id="fig|192952.21.peg.2865"/>
<dbReference type="eggNOG" id="arCOG01959">
    <property type="taxonomic scope" value="Archaea"/>
</dbReference>
<dbReference type="HOGENOM" id="CLU_046525_0_0_2"/>
<dbReference type="Proteomes" id="UP000000595">
    <property type="component" value="Chromosome"/>
</dbReference>
<dbReference type="GO" id="GO:0005886">
    <property type="term" value="C:plasma membrane"/>
    <property type="evidence" value="ECO:0007669"/>
    <property type="project" value="InterPro"/>
</dbReference>
<dbReference type="GO" id="GO:0015079">
    <property type="term" value="F:potassium ion transmembrane transporter activity"/>
    <property type="evidence" value="ECO:0007669"/>
    <property type="project" value="InterPro"/>
</dbReference>
<dbReference type="FunFam" id="3.40.50.720:FF:000675">
    <property type="entry name" value="Trk system potassium uptake protein TrkA"/>
    <property type="match status" value="1"/>
</dbReference>
<dbReference type="FunFam" id="3.40.50.720:FF:000707">
    <property type="entry name" value="Trk system potassium uptake protein TrkA"/>
    <property type="match status" value="1"/>
</dbReference>
<dbReference type="Gene3D" id="3.40.50.720">
    <property type="entry name" value="NAD(P)-binding Rossmann-like Domain"/>
    <property type="match status" value="2"/>
</dbReference>
<dbReference type="Gene3D" id="3.30.70.1450">
    <property type="entry name" value="Regulator of K+ conductance, C-terminal domain"/>
    <property type="match status" value="2"/>
</dbReference>
<dbReference type="InterPro" id="IPR006036">
    <property type="entry name" value="K_uptake_TrkA"/>
</dbReference>
<dbReference type="InterPro" id="IPR036291">
    <property type="entry name" value="NAD(P)-bd_dom_sf"/>
</dbReference>
<dbReference type="InterPro" id="IPR006037">
    <property type="entry name" value="RCK_C"/>
</dbReference>
<dbReference type="InterPro" id="IPR036721">
    <property type="entry name" value="RCK_C_sf"/>
</dbReference>
<dbReference type="InterPro" id="IPR003148">
    <property type="entry name" value="RCK_N"/>
</dbReference>
<dbReference type="InterPro" id="IPR050721">
    <property type="entry name" value="Trk_Ktr_HKT_K-transport"/>
</dbReference>
<dbReference type="NCBIfam" id="NF007031">
    <property type="entry name" value="PRK09496.1-2"/>
    <property type="match status" value="1"/>
</dbReference>
<dbReference type="NCBIfam" id="NF007032">
    <property type="entry name" value="PRK09496.1-4"/>
    <property type="match status" value="1"/>
</dbReference>
<dbReference type="NCBIfam" id="NF007034">
    <property type="entry name" value="PRK09496.2-1"/>
    <property type="match status" value="1"/>
</dbReference>
<dbReference type="NCBIfam" id="NF007036">
    <property type="entry name" value="PRK09496.2-3"/>
    <property type="match status" value="1"/>
</dbReference>
<dbReference type="NCBIfam" id="NF007039">
    <property type="entry name" value="PRK09496.3-2"/>
    <property type="match status" value="1"/>
</dbReference>
<dbReference type="NCBIfam" id="NF007041">
    <property type="entry name" value="PRK09496.3-4"/>
    <property type="match status" value="1"/>
</dbReference>
<dbReference type="PANTHER" id="PTHR43833">
    <property type="entry name" value="POTASSIUM CHANNEL PROTEIN 2-RELATED-RELATED"/>
    <property type="match status" value="1"/>
</dbReference>
<dbReference type="PANTHER" id="PTHR43833:SF5">
    <property type="entry name" value="TRK SYSTEM POTASSIUM UPTAKE PROTEIN TRKA"/>
    <property type="match status" value="1"/>
</dbReference>
<dbReference type="Pfam" id="PF02080">
    <property type="entry name" value="TrkA_C"/>
    <property type="match status" value="2"/>
</dbReference>
<dbReference type="Pfam" id="PF02254">
    <property type="entry name" value="TrkA_N"/>
    <property type="match status" value="2"/>
</dbReference>
<dbReference type="PRINTS" id="PR00335">
    <property type="entry name" value="KUPTAKETRKA"/>
</dbReference>
<dbReference type="SUPFAM" id="SSF51735">
    <property type="entry name" value="NAD(P)-binding Rossmann-fold domains"/>
    <property type="match status" value="2"/>
</dbReference>
<dbReference type="SUPFAM" id="SSF116726">
    <property type="entry name" value="TrkA C-terminal domain-like"/>
    <property type="match status" value="2"/>
</dbReference>
<dbReference type="PROSITE" id="PS51202">
    <property type="entry name" value="RCK_C"/>
    <property type="match status" value="2"/>
</dbReference>
<dbReference type="PROSITE" id="PS51201">
    <property type="entry name" value="RCK_N"/>
    <property type="match status" value="2"/>
</dbReference>
<reference key="1">
    <citation type="journal article" date="2002" name="J. Mol. Microbiol. Biotechnol.">
        <title>The genome of Methanosarcina mazei: evidence for lateral gene transfer between Bacteria and Archaea.</title>
        <authorList>
            <person name="Deppenmeier U."/>
            <person name="Johann A."/>
            <person name="Hartsch T."/>
            <person name="Merkl R."/>
            <person name="Schmitz R.A."/>
            <person name="Martinez-Arias R."/>
            <person name="Henne A."/>
            <person name="Wiezer A."/>
            <person name="Baeumer S."/>
            <person name="Jacobi C."/>
            <person name="Brueggemann H."/>
            <person name="Lienard T."/>
            <person name="Christmann A."/>
            <person name="Boemecke M."/>
            <person name="Steckel S."/>
            <person name="Bhattacharyya A."/>
            <person name="Lykidis A."/>
            <person name="Overbeek R."/>
            <person name="Klenk H.-P."/>
            <person name="Gunsalus R.P."/>
            <person name="Fritz H.-J."/>
            <person name="Gottschalk G."/>
        </authorList>
    </citation>
    <scope>NUCLEOTIDE SEQUENCE [LARGE SCALE GENOMIC DNA]</scope>
    <source>
        <strain>ATCC BAA-159 / DSM 3647 / Goe1 / Go1 / JCM 11833 / OCM 88</strain>
    </source>
</reference>
<protein>
    <recommendedName>
        <fullName>Trk system potassium uptake protein TrkA homolog 1</fullName>
        <shortName>K(+)-uptake protein trkA homolog 1</shortName>
    </recommendedName>
</protein>